<feature type="chain" id="PRO_0000320241" description="Capsid polyprotein VP90">
    <location>
        <begin position="1"/>
        <end position="776"/>
    </location>
</feature>
<feature type="chain" id="PRO_0000460935" description="Capsid polyprotein VP70">
    <location>
        <begin position="1"/>
        <end position="649"/>
    </location>
</feature>
<feature type="chain" id="PRO_0000460936" description="Core protein VP34">
    <location>
        <begin position="1"/>
        <end position="315"/>
    </location>
</feature>
<feature type="chain" id="PRO_0000460937" description="Spike protein VP27">
    <location>
        <begin position="401"/>
        <end position="648"/>
    </location>
</feature>
<feature type="chain" id="PRO_0000460938" description="spike protein VP25">
    <location>
        <begin position="432"/>
        <end position="648"/>
    </location>
</feature>
<feature type="region of interest" description="Basic" evidence="3">
    <location>
        <begin position="1"/>
        <end position="72"/>
    </location>
</feature>
<feature type="region of interest" description="Disordered" evidence="4">
    <location>
        <begin position="1"/>
        <end position="64"/>
    </location>
</feature>
<feature type="region of interest" description="Inner core" evidence="3">
    <location>
        <begin position="73"/>
        <end position="265"/>
    </location>
</feature>
<feature type="region of interest" description="Core attachment" evidence="3">
    <location>
        <begin position="401"/>
        <end position="431"/>
    </location>
</feature>
<feature type="region of interest" description="P2 globular domain" evidence="3">
    <location>
        <begin position="432"/>
        <end position="648"/>
    </location>
</feature>
<feature type="region of interest" description="Disordered" evidence="4">
    <location>
        <begin position="648"/>
        <end position="698"/>
    </location>
</feature>
<feature type="region of interest" description="Acidic" evidence="3">
    <location>
        <begin position="649"/>
        <end position="776"/>
    </location>
</feature>
<feature type="compositionally biased region" description="Basic and acidic residues" evidence="4">
    <location>
        <begin position="1"/>
        <end position="11"/>
    </location>
</feature>
<feature type="compositionally biased region" description="Basic residues" evidence="4">
    <location>
        <begin position="20"/>
        <end position="36"/>
    </location>
</feature>
<feature type="compositionally biased region" description="Acidic residues" evidence="4">
    <location>
        <begin position="660"/>
        <end position="680"/>
    </location>
</feature>
<feature type="site" description="Cleavage" evidence="3">
    <location>
        <begin position="315"/>
        <end position="316"/>
    </location>
</feature>
<feature type="site" description="Cleavage" evidence="3">
    <location>
        <begin position="400"/>
        <end position="401"/>
    </location>
</feature>
<feature type="site" description="Cleavage" evidence="3">
    <location>
        <begin position="431"/>
        <end position="432"/>
    </location>
</feature>
<feature type="site" description="Cleavage" evidence="3">
    <location>
        <begin position="648"/>
        <end position="649"/>
    </location>
</feature>
<feature type="sequence conflict" description="In Ref. 1; CAB95000." evidence="5" ref="1">
    <original>N</original>
    <variation>NEEVDYDN</variation>
    <location>
        <position position="448"/>
    </location>
</feature>
<dbReference type="EMBL" id="AB037272">
    <property type="protein sequence ID" value="BAA90309.1"/>
    <property type="molecule type" value="Genomic_RNA"/>
</dbReference>
<dbReference type="EMBL" id="Y15938">
    <property type="protein sequence ID" value="CAB95000.1"/>
    <property type="molecule type" value="Genomic_RNA"/>
</dbReference>
<dbReference type="SMR" id="Q9JG99"/>
<dbReference type="GO" id="GO:0043655">
    <property type="term" value="C:host extracellular space"/>
    <property type="evidence" value="ECO:0007669"/>
    <property type="project" value="UniProtKB-SubCell"/>
</dbReference>
<dbReference type="GO" id="GO:0039617">
    <property type="term" value="C:T=3 icosahedral viral capsid"/>
    <property type="evidence" value="ECO:0000250"/>
    <property type="project" value="UniProtKB"/>
</dbReference>
<dbReference type="GO" id="GO:0075512">
    <property type="term" value="P:clathrin-dependent endocytosis of virus by host cell"/>
    <property type="evidence" value="ECO:0000250"/>
    <property type="project" value="UniProtKB"/>
</dbReference>
<dbReference type="FunFam" id="2.60.120.20:FF:000007">
    <property type="entry name" value="Capsid polyprotein VP90"/>
    <property type="match status" value="1"/>
</dbReference>
<dbReference type="Gene3D" id="2.60.120.20">
    <property type="match status" value="1"/>
</dbReference>
<dbReference type="InterPro" id="IPR004337">
    <property type="entry name" value="Astro_capsid_N"/>
</dbReference>
<dbReference type="InterPro" id="IPR022027">
    <property type="entry name" value="Astro_capsid_p"/>
</dbReference>
<dbReference type="InterPro" id="IPR029053">
    <property type="entry name" value="Viral_coat"/>
</dbReference>
<dbReference type="Pfam" id="PF03115">
    <property type="entry name" value="Astro_capsid_N"/>
    <property type="match status" value="1"/>
</dbReference>
<dbReference type="Pfam" id="PF12226">
    <property type="entry name" value="Astro_capsid_p"/>
    <property type="match status" value="1"/>
</dbReference>
<sequence>MASKSGKDVTVKVENTNGRGRSRSRSRSRSRARNKNVKITINSKPGASGGQRRRGKPQSDKRVRSIVKQQLDKSGVTGPKPAIRQRATATLGTIGSNSSGKTELEACILTNPILVKDNTGNNTFGPIVALGAQYSLWRIRFLRIKFTPMVGQSAVTGTVVRASLNPTATPSSTGWSGLGARRHIDIVVGKAATFNLKASDLSGPREGWWLTNTNDSGDSTLGPSIEIHTLGTTMSAYQNGPFTGGLFLCELQAEWEFSGYAANPALLSLEKNRDDDAEVSFDGQQGEPLTMVVAEDSLFNKVATRRSTFTRGIARDGQTKSETIWQVVDTAVSAAETVVPPPFGWLIRGGYWFVKKLAGRTKLRNGKQTSSYVCYASYQDALSDKPAICTGVAANFYAGRTETARANLHFTQMNEPSTGVGETPTAFRMYRAAPDDIVYLRFKPETVNISVSPAARLFLARKYTAHSLKVKGNSGTTRIHCVVKVNDPMWYSPDWEQVAQPGPIPGVSLLGGTTTIGIVTAAYQAHMWGLHIATAFIVQVTKDINPACSTSCVLTKELNDQHLKTVAGQTSFNWSLRAGETYLMMSFGAHTSAVGEWVWNDADISVGYTIYNSPLTPCLLLTEGSFHIVLPAKRGLIPLASTELFTVRDQDSIPQTTEPPAEEDVGDNETEDESDDEDLDHFDLHDSSGSEPEDEDVENNRVTLLNTLVNQGVDLARAAKISKRAYPTLAEKTRRSVFMDSLIAGCGPSSAWSEACKAARKVSFKEPISESRGHAE</sequence>
<keyword id="KW-0167">Capsid protein</keyword>
<keyword id="KW-1165">Clathrin-mediated endocytosis of virus by host</keyword>
<keyword id="KW-1142">T=3 icosahedral capsid protein</keyword>
<keyword id="KW-1162">Viral penetration into host cytoplasm</keyword>
<keyword id="KW-0946">Virion</keyword>
<keyword id="KW-1164">Virus endocytosis by host</keyword>
<keyword id="KW-1160">Virus entry into host cell</keyword>
<comment type="function">
    <molecule>Capsid polyprotein VP90</molecule>
    <text evidence="3">The capsid polyprotein VP90 self-assembles and undergoes a proteolytic cleavage by host caspases to yield the immature VP70 virion.</text>
</comment>
<comment type="function">
    <molecule>Capsid polyprotein VP70</molecule>
    <text evidence="3">The immature virion is composed of 180 VP70 subunits with 90 dimeric spikes and displays a T=3 icosahedral symmetry (By similarity). During maturation, VP70 undergoes a loss of 60 peripentonal spikes, which likely plays an important role in viral infectivity (By similarity).</text>
</comment>
<comment type="function">
    <molecule>Core protein VP34</molecule>
    <text evidence="1">Self-assembles to form an icosahedral capsid with a T=3 symmetry, about 43 nm in diameter (By similarity). This forms contains only 30 spikes located on the icosahedral 2-fold axes (By similarity).</text>
</comment>
<comment type="function">
    <molecule>Spike protein VP27</molecule>
    <text evidence="1 3">VP25 and VP27 Forms the spikes at the surface of the virion (By similarity). This forms contains only 30 spikes located on the icosahedral 2-fold axes (By similarity). Plays a role in the attachment to target host cell (By similarity). This attachment induces virion internalization through clathrin-dependent endocytosis (By similarity).</text>
</comment>
<comment type="function">
    <molecule>spike protein VP25</molecule>
    <text evidence="1 2 3">VP25 and VP27 Forms the spikes at the surface of the virion (By similarity). This forms contains only 30 spikes located on the icosahedral 2-fold axes (By similarity). Plays a role in the attachment to target host cell (By similarity). This attachment induces virion internalization through clathrin-dependent endocytosis (By similarity).</text>
</comment>
<comment type="subunit">
    <molecule>spike protein VP25</molecule>
    <text evidence="3">Heterodimer with spike protein VP27 (By similarity). The spikes form a globular dimer with 30 spikes covering the mature virion (By similarity). Spike protein VP25 that lacks the core attachment region may need to dimerize with spike protein VP27 to remain stably bound to the viral particle (By similarity).</text>
</comment>
<comment type="subunit">
    <molecule>Spike protein VP27</molecule>
    <text evidence="3">Heterodimer with spike protein VP25 (By similarity). The spikes form a globular dimer with 30 spikes covering the mature virion (By similarity). Spike protein VP25 that lacks the core attachment region may need to dimerize with spike protein VP27 to remain stably bound to the viral particle (By similarity).</text>
</comment>
<comment type="subcellular location">
    <molecule>Capsid polyprotein VP90</molecule>
    <subcellularLocation>
        <location evidence="3">Virion</location>
    </subcellularLocation>
    <text evidence="3">Immature capsid.</text>
</comment>
<comment type="subcellular location">
    <molecule>Capsid polyprotein VP70</molecule>
    <subcellularLocation>
        <location evidence="3">Virion</location>
    </subcellularLocation>
    <text evidence="3">Immature capsid after cleavage by host caspases.</text>
</comment>
<comment type="subcellular location">
    <molecule>Core protein VP34</molecule>
    <subcellularLocation>
        <location evidence="1">Virion</location>
    </subcellularLocation>
    <text evidence="1">Capsid.</text>
</comment>
<comment type="subcellular location">
    <molecule>Spike protein VP27</molecule>
    <subcellularLocation>
        <location evidence="1">Virion</location>
    </subcellularLocation>
    <text evidence="1">Capsid.</text>
</comment>
<comment type="subcellular location">
    <molecule>spike protein VP25</molecule>
    <subcellularLocation>
        <location evidence="1">Host extracellular space</location>
    </subcellularLocation>
    <subcellularLocation>
        <location>Virion</location>
    </subcellularLocation>
    <text evidence="1 5">Capsid (By similarity). Spike protein VP25 that lacks the core attachment region may need to dimerize with spike protein VP27 to remain stably bound to the viral particle (Probable).</text>
</comment>
<comment type="domain">
    <molecule>Spike protein VP27</molecule>
    <text evidence="3">Contains the core attachment region and the P2 globular region.</text>
</comment>
<comment type="domain">
    <molecule>spike protein VP25</molecule>
    <text evidence="3">Contains the P2 globular region (By similarity). The core attachment region is lost by cleavage (By similarity).</text>
</comment>
<comment type="PTM">
    <molecule>Capsid polyprotein VP90</molecule>
    <text evidence="3">Specific enzymatic cleavages by the host yield mature proteins. VP90 acidic C-terminal domain is eliminated from the immature virion by host caspases during viral maturation giving rise to virions composed of VP70 (By similarity). The virus can then dissociate from cellular membranes and exit the cell (By similarity). Further cleavages by host extracellular proteases occur resulting in the three structural proteins VP34, VP27 and VP25 and conferring infectivity (By similarity).</text>
</comment>
<comment type="similarity">
    <text evidence="5">Belongs to the astroviridae capsid polyprotein family.</text>
</comment>
<evidence type="ECO:0000250" key="1">
    <source>
        <dbReference type="UniProtKB" id="O12792"/>
    </source>
</evidence>
<evidence type="ECO:0000250" key="2">
    <source>
        <dbReference type="UniProtKB" id="Q82446"/>
    </source>
</evidence>
<evidence type="ECO:0000250" key="3">
    <source>
        <dbReference type="UniProtKB" id="Q9IFX1"/>
    </source>
</evidence>
<evidence type="ECO:0000256" key="4">
    <source>
        <dbReference type="SAM" id="MobiDB-lite"/>
    </source>
</evidence>
<evidence type="ECO:0000305" key="5"/>
<organismHost>
    <name type="scientific">Sus scrofa</name>
    <name type="common">Pig</name>
    <dbReference type="NCBI Taxonomy" id="9823"/>
</organismHost>
<name>CAPSD_PASV1</name>
<reference key="1">
    <citation type="journal article" date="2001" name="J. Med. Virol.">
        <title>Genetic analysis of the capsid region of astroviruses.</title>
        <authorList>
            <person name="Wang Q.H."/>
            <person name="Kakizawa J."/>
            <person name="Wen L.Y."/>
            <person name="Shimizu M."/>
            <person name="Nishio O."/>
            <person name="Fang Z.Y."/>
            <person name="Ushijima H."/>
        </authorList>
    </citation>
    <scope>NUCLEOTIDE SEQUENCE [GENOMIC RNA]</scope>
</reference>
<accession>Q9JG99</accession>
<accession>Q9JH64</accession>
<protein>
    <recommendedName>
        <fullName>Capsid polyprotein VP90</fullName>
    </recommendedName>
    <component>
        <recommendedName>
            <fullName>Capsid polyprotein VP70</fullName>
        </recommendedName>
    </component>
    <component>
        <recommendedName>
            <fullName>Core protein VP34</fullName>
        </recommendedName>
    </component>
    <component>
        <recommendedName>
            <fullName>Spike protein VP27</fullName>
        </recommendedName>
    </component>
    <component>
        <recommendedName>
            <fullName>spike protein VP25</fullName>
        </recommendedName>
    </component>
</protein>
<proteinExistence type="inferred from homology"/>
<gene>
    <name type="ORF">ORF2</name>
</gene>
<organism>
    <name type="scientific">Porcine astrovirus 1</name>
    <name type="common">PAstV-1</name>
    <dbReference type="NCBI Taxonomy" id="1239567"/>
    <lineage>
        <taxon>Viruses</taxon>
        <taxon>Riboviria</taxon>
        <taxon>Orthornavirae</taxon>
        <taxon>Pisuviricota</taxon>
        <taxon>Stelpaviricetes</taxon>
        <taxon>Stellavirales</taxon>
        <taxon>Astroviridae</taxon>
        <taxon>Mamastrovirus</taxon>
    </lineage>
</organism>